<sequence>MSKKLTFQEIILTLQQFWNDQGCMLMQAYDNEKGAGTMSPYTFLRAIGPEPWNAAYVEPSRRPADGRYGENPNRLYQHHQFQVVMKPSPSNIQELYLESLEKLGINPLEHDIRFVEDNWENPSTGSAGLGWEVWLDGMEITQFTYFQQVGGLATGPVTAEVTYGLERLASYIQEVDSIYDIEWADGVKYGEIFIQPEYEHSKYSFEISDQEMLLENFDKFEKEAGRALEEGLVHPAYDYVLKCSHTFNLLDARGAVSVTERAGYIARIRNLARVVAKTFVAERKRLGYPLLDEETRVKLLAEDAE</sequence>
<accession>Q8DP65</accession>
<reference key="1">
    <citation type="journal article" date="2001" name="J. Bacteriol.">
        <title>Genome of the bacterium Streptococcus pneumoniae strain R6.</title>
        <authorList>
            <person name="Hoskins J."/>
            <person name="Alborn W.E. Jr."/>
            <person name="Arnold J."/>
            <person name="Blaszczak L.C."/>
            <person name="Burgett S."/>
            <person name="DeHoff B.S."/>
            <person name="Estrem S.T."/>
            <person name="Fritz L."/>
            <person name="Fu D.-J."/>
            <person name="Fuller W."/>
            <person name="Geringer C."/>
            <person name="Gilmour R."/>
            <person name="Glass J.S."/>
            <person name="Khoja H."/>
            <person name="Kraft A.R."/>
            <person name="Lagace R.E."/>
            <person name="LeBlanc D.J."/>
            <person name="Lee L.N."/>
            <person name="Lefkowitz E.J."/>
            <person name="Lu J."/>
            <person name="Matsushima P."/>
            <person name="McAhren S.M."/>
            <person name="McHenney M."/>
            <person name="McLeaster K."/>
            <person name="Mundy C.W."/>
            <person name="Nicas T.I."/>
            <person name="Norris F.H."/>
            <person name="O'Gara M."/>
            <person name="Peery R.B."/>
            <person name="Robertson G.T."/>
            <person name="Rockey P."/>
            <person name="Sun P.-M."/>
            <person name="Winkler M.E."/>
            <person name="Yang Y."/>
            <person name="Young-Bellido M."/>
            <person name="Zhao G."/>
            <person name="Zook C.A."/>
            <person name="Baltz R.H."/>
            <person name="Jaskunas S.R."/>
            <person name="Rosteck P.R. Jr."/>
            <person name="Skatrud P.L."/>
            <person name="Glass J.I."/>
        </authorList>
    </citation>
    <scope>NUCLEOTIDE SEQUENCE [LARGE SCALE GENOMIC DNA]</scope>
    <source>
        <strain>ATCC BAA-255 / R6</strain>
    </source>
</reference>
<gene>
    <name evidence="1" type="primary">glyQ</name>
    <name type="ordered locus">spr1329</name>
</gene>
<organism>
    <name type="scientific">Streptococcus pneumoniae (strain ATCC BAA-255 / R6)</name>
    <dbReference type="NCBI Taxonomy" id="171101"/>
    <lineage>
        <taxon>Bacteria</taxon>
        <taxon>Bacillati</taxon>
        <taxon>Bacillota</taxon>
        <taxon>Bacilli</taxon>
        <taxon>Lactobacillales</taxon>
        <taxon>Streptococcaceae</taxon>
        <taxon>Streptococcus</taxon>
    </lineage>
</organism>
<comment type="catalytic activity">
    <reaction evidence="1">
        <text>tRNA(Gly) + glycine + ATP = glycyl-tRNA(Gly) + AMP + diphosphate</text>
        <dbReference type="Rhea" id="RHEA:16013"/>
        <dbReference type="Rhea" id="RHEA-COMP:9664"/>
        <dbReference type="Rhea" id="RHEA-COMP:9683"/>
        <dbReference type="ChEBI" id="CHEBI:30616"/>
        <dbReference type="ChEBI" id="CHEBI:33019"/>
        <dbReference type="ChEBI" id="CHEBI:57305"/>
        <dbReference type="ChEBI" id="CHEBI:78442"/>
        <dbReference type="ChEBI" id="CHEBI:78522"/>
        <dbReference type="ChEBI" id="CHEBI:456215"/>
        <dbReference type="EC" id="6.1.1.14"/>
    </reaction>
</comment>
<comment type="subunit">
    <text evidence="1">Tetramer of two alpha and two beta subunits.</text>
</comment>
<comment type="subcellular location">
    <subcellularLocation>
        <location evidence="1">Cytoplasm</location>
    </subcellularLocation>
</comment>
<comment type="similarity">
    <text evidence="1">Belongs to the class-II aminoacyl-tRNA synthetase family.</text>
</comment>
<feature type="chain" id="PRO_0000072870" description="Glycine--tRNA ligase alpha subunit">
    <location>
        <begin position="1"/>
        <end position="305"/>
    </location>
</feature>
<dbReference type="EC" id="6.1.1.14" evidence="1"/>
<dbReference type="EMBL" id="AE007317">
    <property type="protein sequence ID" value="AAL00133.1"/>
    <property type="molecule type" value="Genomic_DNA"/>
</dbReference>
<dbReference type="PIR" id="H98037">
    <property type="entry name" value="H98037"/>
</dbReference>
<dbReference type="RefSeq" id="NP_358922.1">
    <property type="nucleotide sequence ID" value="NC_003098.1"/>
</dbReference>
<dbReference type="RefSeq" id="WP_000038729.1">
    <property type="nucleotide sequence ID" value="NC_003098.1"/>
</dbReference>
<dbReference type="SMR" id="Q8DP65"/>
<dbReference type="STRING" id="171101.spr1329"/>
<dbReference type="KEGG" id="spr:spr1329"/>
<dbReference type="PATRIC" id="fig|171101.6.peg.1441"/>
<dbReference type="eggNOG" id="COG0752">
    <property type="taxonomic scope" value="Bacteria"/>
</dbReference>
<dbReference type="HOGENOM" id="CLU_057066_1_0_9"/>
<dbReference type="Proteomes" id="UP000000586">
    <property type="component" value="Chromosome"/>
</dbReference>
<dbReference type="GO" id="GO:0005737">
    <property type="term" value="C:cytoplasm"/>
    <property type="evidence" value="ECO:0007669"/>
    <property type="project" value="UniProtKB-SubCell"/>
</dbReference>
<dbReference type="GO" id="GO:0005524">
    <property type="term" value="F:ATP binding"/>
    <property type="evidence" value="ECO:0007669"/>
    <property type="project" value="UniProtKB-UniRule"/>
</dbReference>
<dbReference type="GO" id="GO:0140096">
    <property type="term" value="F:catalytic activity, acting on a protein"/>
    <property type="evidence" value="ECO:0007669"/>
    <property type="project" value="UniProtKB-ARBA"/>
</dbReference>
<dbReference type="GO" id="GO:0004820">
    <property type="term" value="F:glycine-tRNA ligase activity"/>
    <property type="evidence" value="ECO:0007669"/>
    <property type="project" value="UniProtKB-UniRule"/>
</dbReference>
<dbReference type="GO" id="GO:0016740">
    <property type="term" value="F:transferase activity"/>
    <property type="evidence" value="ECO:0007669"/>
    <property type="project" value="UniProtKB-ARBA"/>
</dbReference>
<dbReference type="GO" id="GO:0006426">
    <property type="term" value="P:glycyl-tRNA aminoacylation"/>
    <property type="evidence" value="ECO:0007669"/>
    <property type="project" value="UniProtKB-UniRule"/>
</dbReference>
<dbReference type="CDD" id="cd00733">
    <property type="entry name" value="GlyRS_alpha_core"/>
    <property type="match status" value="1"/>
</dbReference>
<dbReference type="FunFam" id="3.30.930.10:FF:000006">
    <property type="entry name" value="Glycine--tRNA ligase alpha subunit"/>
    <property type="match status" value="1"/>
</dbReference>
<dbReference type="Gene3D" id="3.30.930.10">
    <property type="entry name" value="Bira Bifunctional Protein, Domain 2"/>
    <property type="match status" value="1"/>
</dbReference>
<dbReference type="Gene3D" id="1.20.58.180">
    <property type="entry name" value="Class II aaRS and biotin synthetases, domain 2"/>
    <property type="match status" value="1"/>
</dbReference>
<dbReference type="HAMAP" id="MF_00254">
    <property type="entry name" value="Gly_tRNA_synth_alpha"/>
    <property type="match status" value="1"/>
</dbReference>
<dbReference type="InterPro" id="IPR045864">
    <property type="entry name" value="aa-tRNA-synth_II/BPL/LPL"/>
</dbReference>
<dbReference type="InterPro" id="IPR006194">
    <property type="entry name" value="Gly-tRNA-synth_heterodimer"/>
</dbReference>
<dbReference type="InterPro" id="IPR002310">
    <property type="entry name" value="Gly-tRNA_ligase_asu"/>
</dbReference>
<dbReference type="NCBIfam" id="TIGR00388">
    <property type="entry name" value="glyQ"/>
    <property type="match status" value="1"/>
</dbReference>
<dbReference type="NCBIfam" id="NF006827">
    <property type="entry name" value="PRK09348.1"/>
    <property type="match status" value="1"/>
</dbReference>
<dbReference type="PANTHER" id="PTHR30075:SF2">
    <property type="entry name" value="GLYCINE--TRNA LIGASE, CHLOROPLASTIC_MITOCHONDRIAL 2"/>
    <property type="match status" value="1"/>
</dbReference>
<dbReference type="PANTHER" id="PTHR30075">
    <property type="entry name" value="GLYCYL-TRNA SYNTHETASE"/>
    <property type="match status" value="1"/>
</dbReference>
<dbReference type="Pfam" id="PF02091">
    <property type="entry name" value="tRNA-synt_2e"/>
    <property type="match status" value="1"/>
</dbReference>
<dbReference type="PRINTS" id="PR01044">
    <property type="entry name" value="TRNASYNTHGA"/>
</dbReference>
<dbReference type="SUPFAM" id="SSF55681">
    <property type="entry name" value="Class II aaRS and biotin synthetases"/>
    <property type="match status" value="1"/>
</dbReference>
<dbReference type="PROSITE" id="PS50861">
    <property type="entry name" value="AA_TRNA_LIGASE_II_GLYAB"/>
    <property type="match status" value="1"/>
</dbReference>
<name>SYGA_STRR6</name>
<evidence type="ECO:0000255" key="1">
    <source>
        <dbReference type="HAMAP-Rule" id="MF_00254"/>
    </source>
</evidence>
<protein>
    <recommendedName>
        <fullName evidence="1">Glycine--tRNA ligase alpha subunit</fullName>
        <ecNumber evidence="1">6.1.1.14</ecNumber>
    </recommendedName>
    <alternativeName>
        <fullName evidence="1">Glycyl-tRNA synthetase alpha subunit</fullName>
        <shortName evidence="1">GlyRS</shortName>
    </alternativeName>
</protein>
<keyword id="KW-0030">Aminoacyl-tRNA synthetase</keyword>
<keyword id="KW-0067">ATP-binding</keyword>
<keyword id="KW-0963">Cytoplasm</keyword>
<keyword id="KW-0436">Ligase</keyword>
<keyword id="KW-0547">Nucleotide-binding</keyword>
<keyword id="KW-0648">Protein biosynthesis</keyword>
<keyword id="KW-1185">Reference proteome</keyword>
<proteinExistence type="inferred from homology"/>